<gene>
    <name evidence="1" type="primary">rplE</name>
    <name type="ordered locus">MYPE10050</name>
</gene>
<name>RL5_MALP2</name>
<dbReference type="EMBL" id="BA000026">
    <property type="protein sequence ID" value="BAC44791.1"/>
    <property type="molecule type" value="Genomic_DNA"/>
</dbReference>
<dbReference type="RefSeq" id="WP_011077819.1">
    <property type="nucleotide sequence ID" value="NC_004432.1"/>
</dbReference>
<dbReference type="SMR" id="Q8EUC5"/>
<dbReference type="FunCoup" id="Q8EUC5">
    <property type="interactions" value="258"/>
</dbReference>
<dbReference type="STRING" id="272633.gene:10732125"/>
<dbReference type="KEGG" id="mpe:MYPE10050"/>
<dbReference type="eggNOG" id="COG0094">
    <property type="taxonomic scope" value="Bacteria"/>
</dbReference>
<dbReference type="HOGENOM" id="CLU_061015_2_1_14"/>
<dbReference type="InParanoid" id="Q8EUC5"/>
<dbReference type="Proteomes" id="UP000002522">
    <property type="component" value="Chromosome"/>
</dbReference>
<dbReference type="GO" id="GO:1990904">
    <property type="term" value="C:ribonucleoprotein complex"/>
    <property type="evidence" value="ECO:0007669"/>
    <property type="project" value="UniProtKB-KW"/>
</dbReference>
<dbReference type="GO" id="GO:0005840">
    <property type="term" value="C:ribosome"/>
    <property type="evidence" value="ECO:0007669"/>
    <property type="project" value="UniProtKB-KW"/>
</dbReference>
<dbReference type="GO" id="GO:0019843">
    <property type="term" value="F:rRNA binding"/>
    <property type="evidence" value="ECO:0007669"/>
    <property type="project" value="UniProtKB-UniRule"/>
</dbReference>
<dbReference type="GO" id="GO:0003735">
    <property type="term" value="F:structural constituent of ribosome"/>
    <property type="evidence" value="ECO:0007669"/>
    <property type="project" value="InterPro"/>
</dbReference>
<dbReference type="GO" id="GO:0000049">
    <property type="term" value="F:tRNA binding"/>
    <property type="evidence" value="ECO:0007669"/>
    <property type="project" value="UniProtKB-UniRule"/>
</dbReference>
<dbReference type="GO" id="GO:0006412">
    <property type="term" value="P:translation"/>
    <property type="evidence" value="ECO:0007669"/>
    <property type="project" value="UniProtKB-UniRule"/>
</dbReference>
<dbReference type="FunFam" id="3.30.1440.10:FF:000001">
    <property type="entry name" value="50S ribosomal protein L5"/>
    <property type="match status" value="1"/>
</dbReference>
<dbReference type="Gene3D" id="3.30.1440.10">
    <property type="match status" value="1"/>
</dbReference>
<dbReference type="HAMAP" id="MF_01333_B">
    <property type="entry name" value="Ribosomal_uL5_B"/>
    <property type="match status" value="1"/>
</dbReference>
<dbReference type="InterPro" id="IPR002132">
    <property type="entry name" value="Ribosomal_uL5"/>
</dbReference>
<dbReference type="InterPro" id="IPR020930">
    <property type="entry name" value="Ribosomal_uL5_bac-type"/>
</dbReference>
<dbReference type="InterPro" id="IPR031309">
    <property type="entry name" value="Ribosomal_uL5_C"/>
</dbReference>
<dbReference type="InterPro" id="IPR020929">
    <property type="entry name" value="Ribosomal_uL5_CS"/>
</dbReference>
<dbReference type="InterPro" id="IPR022803">
    <property type="entry name" value="Ribosomal_uL5_dom_sf"/>
</dbReference>
<dbReference type="InterPro" id="IPR031310">
    <property type="entry name" value="Ribosomal_uL5_N"/>
</dbReference>
<dbReference type="NCBIfam" id="NF000585">
    <property type="entry name" value="PRK00010.1"/>
    <property type="match status" value="1"/>
</dbReference>
<dbReference type="PANTHER" id="PTHR11994">
    <property type="entry name" value="60S RIBOSOMAL PROTEIN L11-RELATED"/>
    <property type="match status" value="1"/>
</dbReference>
<dbReference type="Pfam" id="PF00281">
    <property type="entry name" value="Ribosomal_L5"/>
    <property type="match status" value="1"/>
</dbReference>
<dbReference type="Pfam" id="PF00673">
    <property type="entry name" value="Ribosomal_L5_C"/>
    <property type="match status" value="1"/>
</dbReference>
<dbReference type="PIRSF" id="PIRSF002161">
    <property type="entry name" value="Ribosomal_L5"/>
    <property type="match status" value="1"/>
</dbReference>
<dbReference type="SUPFAM" id="SSF55282">
    <property type="entry name" value="RL5-like"/>
    <property type="match status" value="1"/>
</dbReference>
<dbReference type="PROSITE" id="PS00358">
    <property type="entry name" value="RIBOSOMAL_L5"/>
    <property type="match status" value="1"/>
</dbReference>
<comment type="function">
    <text evidence="1">This is one of the proteins that bind and probably mediate the attachment of the 5S RNA into the large ribosomal subunit, where it forms part of the central protuberance. In the 70S ribosome it contacts protein S13 of the 30S subunit (bridge B1b), connecting the 2 subunits; this bridge is implicated in subunit movement. Contacts the P site tRNA; the 5S rRNA and some of its associated proteins might help stabilize positioning of ribosome-bound tRNAs.</text>
</comment>
<comment type="subunit">
    <text evidence="1">Part of the 50S ribosomal subunit; part of the 5S rRNA/L5/L18/L25 subcomplex. Contacts the 5S rRNA and the P site tRNA. Forms a bridge to the 30S subunit in the 70S ribosome.</text>
</comment>
<comment type="similarity">
    <text evidence="1">Belongs to the universal ribosomal protein uL5 family.</text>
</comment>
<reference key="1">
    <citation type="journal article" date="2002" name="Nucleic Acids Res.">
        <title>The complete genomic sequence of Mycoplasma penetrans, an intracellular bacterial pathogen in humans.</title>
        <authorList>
            <person name="Sasaki Y."/>
            <person name="Ishikawa J."/>
            <person name="Yamashita A."/>
            <person name="Oshima K."/>
            <person name="Kenri T."/>
            <person name="Furuya K."/>
            <person name="Yoshino C."/>
            <person name="Horino A."/>
            <person name="Shiba T."/>
            <person name="Sasaki T."/>
            <person name="Hattori M."/>
        </authorList>
    </citation>
    <scope>NUCLEOTIDE SEQUENCE [LARGE SCALE GENOMIC DNA]</scope>
    <source>
        <strain>HF-2</strain>
    </source>
</reference>
<evidence type="ECO:0000255" key="1">
    <source>
        <dbReference type="HAMAP-Rule" id="MF_01333"/>
    </source>
</evidence>
<evidence type="ECO:0000305" key="2"/>
<proteinExistence type="inferred from homology"/>
<feature type="chain" id="PRO_0000124953" description="Large ribosomal subunit protein uL5">
    <location>
        <begin position="1"/>
        <end position="187"/>
    </location>
</feature>
<keyword id="KW-1185">Reference proteome</keyword>
<keyword id="KW-0687">Ribonucleoprotein</keyword>
<keyword id="KW-0689">Ribosomal protein</keyword>
<keyword id="KW-0694">RNA-binding</keyword>
<keyword id="KW-0699">rRNA-binding</keyword>
<keyword id="KW-0820">tRNA-binding</keyword>
<organism>
    <name type="scientific">Malacoplasma penetrans (strain HF-2)</name>
    <name type="common">Mycoplasma penetrans</name>
    <dbReference type="NCBI Taxonomy" id="272633"/>
    <lineage>
        <taxon>Bacteria</taxon>
        <taxon>Bacillati</taxon>
        <taxon>Mycoplasmatota</taxon>
        <taxon>Mycoplasmoidales</taxon>
        <taxon>Mycoplasmoidaceae</taxon>
        <taxon>Malacoplasma</taxon>
    </lineage>
</organism>
<accession>Q8EUC5</accession>
<protein>
    <recommendedName>
        <fullName evidence="1">Large ribosomal subunit protein uL5</fullName>
    </recommendedName>
    <alternativeName>
        <fullName evidence="2">50S ribosomal protein L5</fullName>
    </alternativeName>
</protein>
<sequence>MAIKSVLYDKYKKDVTKSLMKEFNYKSTMEIPRLEKIVINSGLGDATSDSKIVEIGLKELHLITGQKPIATKSKKSIATFKLREGQAIGAKVTLRRENMWNFLTKLISIAIPRIRDFRGLSTKSFDGNGNYTFGIKEQIIFPEIVYDDVKKLRGFDITIVTSAKTDKEAMFLLKELGMPFVKTKEAK</sequence>